<comment type="similarity">
    <text evidence="1">Belongs to the UPF0482 family.</text>
</comment>
<comment type="sequence caution" evidence="2">
    <conflict type="erroneous initiation">
        <sequence resource="EMBL-CDS" id="ACN46347"/>
    </conflict>
</comment>
<protein>
    <recommendedName>
        <fullName evidence="1">UPF0482 protein YnfB</fullName>
    </recommendedName>
</protein>
<proteinExistence type="inferred from homology"/>
<feature type="signal peptide" evidence="1">
    <location>
        <begin position="1"/>
        <end position="28"/>
    </location>
</feature>
<feature type="chain" id="PRO_0000382542" description="UPF0482 protein YnfB">
    <location>
        <begin position="29"/>
        <end position="113"/>
    </location>
</feature>
<reference key="1">
    <citation type="journal article" date="2009" name="PLoS ONE">
        <title>Salmonella paratyphi C: genetic divergence from Salmonella choleraesuis and pathogenic convergence with Salmonella typhi.</title>
        <authorList>
            <person name="Liu W.-Q."/>
            <person name="Feng Y."/>
            <person name="Wang Y."/>
            <person name="Zou Q.-H."/>
            <person name="Chen F."/>
            <person name="Guo J.-T."/>
            <person name="Peng Y.-H."/>
            <person name="Jin Y."/>
            <person name="Li Y.-G."/>
            <person name="Hu S.-N."/>
            <person name="Johnston R.N."/>
            <person name="Liu G.-R."/>
            <person name="Liu S.-L."/>
        </authorList>
    </citation>
    <scope>NUCLEOTIDE SEQUENCE [LARGE SCALE GENOMIC DNA]</scope>
    <source>
        <strain>RKS4594</strain>
    </source>
</reference>
<organism>
    <name type="scientific">Salmonella paratyphi C (strain RKS4594)</name>
    <dbReference type="NCBI Taxonomy" id="476213"/>
    <lineage>
        <taxon>Bacteria</taxon>
        <taxon>Pseudomonadati</taxon>
        <taxon>Pseudomonadota</taxon>
        <taxon>Gammaproteobacteria</taxon>
        <taxon>Enterobacterales</taxon>
        <taxon>Enterobacteriaceae</taxon>
        <taxon>Salmonella</taxon>
    </lineage>
</organism>
<accession>C0Q4W4</accession>
<gene>
    <name evidence="1" type="primary">ynfB</name>
    <name type="ordered locus">SPC_2226</name>
</gene>
<dbReference type="EMBL" id="CP000857">
    <property type="protein sequence ID" value="ACN46347.1"/>
    <property type="status" value="ALT_INIT"/>
    <property type="molecule type" value="Genomic_DNA"/>
</dbReference>
<dbReference type="RefSeq" id="WP_001066440.1">
    <property type="nucleotide sequence ID" value="NC_012125.1"/>
</dbReference>
<dbReference type="KEGG" id="sei:SPC_2226"/>
<dbReference type="HOGENOM" id="CLU_167574_0_0_6"/>
<dbReference type="Proteomes" id="UP000001599">
    <property type="component" value="Chromosome"/>
</dbReference>
<dbReference type="HAMAP" id="MF_01581">
    <property type="entry name" value="UPF0482"/>
    <property type="match status" value="1"/>
</dbReference>
<dbReference type="InterPro" id="IPR009700">
    <property type="entry name" value="DUF1283"/>
</dbReference>
<dbReference type="NCBIfam" id="NF010180">
    <property type="entry name" value="PRK13659.1"/>
    <property type="match status" value="1"/>
</dbReference>
<dbReference type="Pfam" id="PF06932">
    <property type="entry name" value="DUF1283"/>
    <property type="match status" value="1"/>
</dbReference>
<keyword id="KW-0732">Signal</keyword>
<name>YNFB_SALPC</name>
<sequence>MNNTLSKRLCLTAMLTLAAVVYTTSAFAETSKLVIESGDSAQSRQEAAMEKEQWNDTRSLRQKVNTRAEKEWDKADAAFDNRDKCEQSANINAYWEPNTLRCLDRRTGRVITP</sequence>
<evidence type="ECO:0000255" key="1">
    <source>
        <dbReference type="HAMAP-Rule" id="MF_01581"/>
    </source>
</evidence>
<evidence type="ECO:0000305" key="2"/>